<sequence>MRVIAIVLDSVGIGEMPDSSEYGDQGSNTLVNTARAVGKLNLPNLAKMGLGNLDTIEGVPSMPAKGAYGVMLEKSPGKDSTTGHWELAGIILKKPFDLFPNGFPENLIKEFEKRTGRRVIGNKPASGTEIIKELGLEHEQTGALIVYTSADSVFQIAAKEEIVPVEELYRCCEIARDLLDEFGFKVGRVIARPFTGNYPDYVRTPRRHDYSLEPEDEMLLDVLVQSDIPVYGVGKIYDLYAGRGITESYKTDSNIDGIQKTIKLIMEKQHTCFIYTNLVDYDMKYGHRNDPHGYAKALEEFDFNLPEIWKNMKEDDFLFITADHGCDPTTPSTDHSRERVPILVCGSKVRKNVYLGIRESFADFGQTIADLFGVRKLNNGTSFKSLLLH</sequence>
<protein>
    <recommendedName>
        <fullName evidence="1">Phosphopentomutase</fullName>
        <ecNumber evidence="1">5.4.2.7</ecNumber>
    </recommendedName>
    <alternativeName>
        <fullName evidence="1">Phosphodeoxyribomutase</fullName>
    </alternativeName>
</protein>
<proteinExistence type="inferred from homology"/>
<reference key="1">
    <citation type="submission" date="2007-08" db="EMBL/GenBank/DDBJ databases">
        <title>Complete sequence of Thermotoga lettingae TMO.</title>
        <authorList>
            <consortium name="US DOE Joint Genome Institute"/>
            <person name="Copeland A."/>
            <person name="Lucas S."/>
            <person name="Lapidus A."/>
            <person name="Barry K."/>
            <person name="Glavina del Rio T."/>
            <person name="Dalin E."/>
            <person name="Tice H."/>
            <person name="Pitluck S."/>
            <person name="Foster B."/>
            <person name="Bruce D."/>
            <person name="Schmutz J."/>
            <person name="Larimer F."/>
            <person name="Land M."/>
            <person name="Hauser L."/>
            <person name="Kyrpides N."/>
            <person name="Mikhailova N."/>
            <person name="Nelson K."/>
            <person name="Gogarten J.P."/>
            <person name="Noll K."/>
            <person name="Richardson P."/>
        </authorList>
    </citation>
    <scope>NUCLEOTIDE SEQUENCE [LARGE SCALE GENOMIC DNA]</scope>
    <source>
        <strain>ATCC BAA-301 / DSM 14385 / NBRC 107922 / TMO</strain>
    </source>
</reference>
<comment type="function">
    <text evidence="1">Isomerase that catalyzes the conversion of deoxy-ribose 1-phosphate (dRib-1-P) and ribose 1-phosphate (Rib-1-P) to deoxy-ribose 5-phosphate (dRib-5-P) and ribose 5-phosphate (Rib-5-P), respectively.</text>
</comment>
<comment type="catalytic activity">
    <reaction evidence="1">
        <text>2-deoxy-alpha-D-ribose 1-phosphate = 2-deoxy-D-ribose 5-phosphate</text>
        <dbReference type="Rhea" id="RHEA:27658"/>
        <dbReference type="ChEBI" id="CHEBI:57259"/>
        <dbReference type="ChEBI" id="CHEBI:62877"/>
        <dbReference type="EC" id="5.4.2.7"/>
    </reaction>
</comment>
<comment type="catalytic activity">
    <reaction evidence="1">
        <text>alpha-D-ribose 1-phosphate = D-ribose 5-phosphate</text>
        <dbReference type="Rhea" id="RHEA:18793"/>
        <dbReference type="ChEBI" id="CHEBI:57720"/>
        <dbReference type="ChEBI" id="CHEBI:78346"/>
        <dbReference type="EC" id="5.4.2.7"/>
    </reaction>
</comment>
<comment type="cofactor">
    <cofactor evidence="1">
        <name>Mn(2+)</name>
        <dbReference type="ChEBI" id="CHEBI:29035"/>
    </cofactor>
    <text evidence="1">Binds 2 manganese ions.</text>
</comment>
<comment type="pathway">
    <text evidence="1">Carbohydrate degradation; 2-deoxy-D-ribose 1-phosphate degradation; D-glyceraldehyde 3-phosphate and acetaldehyde from 2-deoxy-alpha-D-ribose 1-phosphate: step 1/2.</text>
</comment>
<comment type="subcellular location">
    <subcellularLocation>
        <location evidence="1">Cytoplasm</location>
    </subcellularLocation>
</comment>
<comment type="similarity">
    <text evidence="1">Belongs to the phosphopentomutase family.</text>
</comment>
<gene>
    <name evidence="1" type="primary">deoB</name>
    <name type="ordered locus">Tlet_1089</name>
</gene>
<organism>
    <name type="scientific">Pseudothermotoga lettingae (strain ATCC BAA-301 / DSM 14385 / NBRC 107922 / TMO)</name>
    <name type="common">Thermotoga lettingae</name>
    <dbReference type="NCBI Taxonomy" id="416591"/>
    <lineage>
        <taxon>Bacteria</taxon>
        <taxon>Thermotogati</taxon>
        <taxon>Thermotogota</taxon>
        <taxon>Thermotogae</taxon>
        <taxon>Thermotogales</taxon>
        <taxon>Thermotogaceae</taxon>
        <taxon>Pseudothermotoga</taxon>
    </lineage>
</organism>
<name>DEOB_PSELT</name>
<keyword id="KW-0963">Cytoplasm</keyword>
<keyword id="KW-0413">Isomerase</keyword>
<keyword id="KW-0464">Manganese</keyword>
<keyword id="KW-0479">Metal-binding</keyword>
<keyword id="KW-1185">Reference proteome</keyword>
<evidence type="ECO:0000255" key="1">
    <source>
        <dbReference type="HAMAP-Rule" id="MF_00740"/>
    </source>
</evidence>
<feature type="chain" id="PRO_1000062153" description="Phosphopentomutase">
    <location>
        <begin position="1"/>
        <end position="389"/>
    </location>
</feature>
<feature type="binding site" evidence="1">
    <location>
        <position position="9"/>
    </location>
    <ligand>
        <name>Mn(2+)</name>
        <dbReference type="ChEBI" id="CHEBI:29035"/>
        <label>1</label>
    </ligand>
</feature>
<feature type="binding site" evidence="1">
    <location>
        <position position="282"/>
    </location>
    <ligand>
        <name>Mn(2+)</name>
        <dbReference type="ChEBI" id="CHEBI:29035"/>
        <label>2</label>
    </ligand>
</feature>
<feature type="binding site" evidence="1">
    <location>
        <position position="287"/>
    </location>
    <ligand>
        <name>Mn(2+)</name>
        <dbReference type="ChEBI" id="CHEBI:29035"/>
        <label>2</label>
    </ligand>
</feature>
<feature type="binding site" evidence="1">
    <location>
        <position position="323"/>
    </location>
    <ligand>
        <name>Mn(2+)</name>
        <dbReference type="ChEBI" id="CHEBI:29035"/>
        <label>1</label>
    </ligand>
</feature>
<feature type="binding site" evidence="1">
    <location>
        <position position="324"/>
    </location>
    <ligand>
        <name>Mn(2+)</name>
        <dbReference type="ChEBI" id="CHEBI:29035"/>
        <label>1</label>
    </ligand>
</feature>
<feature type="binding site" evidence="1">
    <location>
        <position position="335"/>
    </location>
    <ligand>
        <name>Mn(2+)</name>
        <dbReference type="ChEBI" id="CHEBI:29035"/>
        <label>2</label>
    </ligand>
</feature>
<dbReference type="EC" id="5.4.2.7" evidence="1"/>
<dbReference type="EMBL" id="CP000812">
    <property type="protein sequence ID" value="ABV33654.1"/>
    <property type="molecule type" value="Genomic_DNA"/>
</dbReference>
<dbReference type="RefSeq" id="WP_012003135.1">
    <property type="nucleotide sequence ID" value="NZ_BSDV01000001.1"/>
</dbReference>
<dbReference type="SMR" id="A8F670"/>
<dbReference type="STRING" id="416591.Tlet_1089"/>
<dbReference type="KEGG" id="tle:Tlet_1089"/>
<dbReference type="eggNOG" id="COG1015">
    <property type="taxonomic scope" value="Bacteria"/>
</dbReference>
<dbReference type="HOGENOM" id="CLU_053861_0_0_0"/>
<dbReference type="OrthoDB" id="9769930at2"/>
<dbReference type="UniPathway" id="UPA00002">
    <property type="reaction ID" value="UER00467"/>
</dbReference>
<dbReference type="Proteomes" id="UP000002016">
    <property type="component" value="Chromosome"/>
</dbReference>
<dbReference type="GO" id="GO:0005829">
    <property type="term" value="C:cytosol"/>
    <property type="evidence" value="ECO:0007669"/>
    <property type="project" value="TreeGrafter"/>
</dbReference>
<dbReference type="GO" id="GO:0000287">
    <property type="term" value="F:magnesium ion binding"/>
    <property type="evidence" value="ECO:0007669"/>
    <property type="project" value="InterPro"/>
</dbReference>
<dbReference type="GO" id="GO:0030145">
    <property type="term" value="F:manganese ion binding"/>
    <property type="evidence" value="ECO:0007669"/>
    <property type="project" value="UniProtKB-UniRule"/>
</dbReference>
<dbReference type="GO" id="GO:0008973">
    <property type="term" value="F:phosphopentomutase activity"/>
    <property type="evidence" value="ECO:0007669"/>
    <property type="project" value="UniProtKB-UniRule"/>
</dbReference>
<dbReference type="GO" id="GO:0006018">
    <property type="term" value="P:2-deoxyribose 1-phosphate catabolic process"/>
    <property type="evidence" value="ECO:0007669"/>
    <property type="project" value="UniProtKB-UniRule"/>
</dbReference>
<dbReference type="GO" id="GO:0006015">
    <property type="term" value="P:5-phosphoribose 1-diphosphate biosynthetic process"/>
    <property type="evidence" value="ECO:0007669"/>
    <property type="project" value="UniProtKB-UniPathway"/>
</dbReference>
<dbReference type="GO" id="GO:0043094">
    <property type="term" value="P:metabolic compound salvage"/>
    <property type="evidence" value="ECO:0007669"/>
    <property type="project" value="InterPro"/>
</dbReference>
<dbReference type="GO" id="GO:0009117">
    <property type="term" value="P:nucleotide metabolic process"/>
    <property type="evidence" value="ECO:0007669"/>
    <property type="project" value="InterPro"/>
</dbReference>
<dbReference type="CDD" id="cd16009">
    <property type="entry name" value="PPM"/>
    <property type="match status" value="1"/>
</dbReference>
<dbReference type="FunFam" id="3.30.70.1250:FF:000001">
    <property type="entry name" value="Phosphopentomutase"/>
    <property type="match status" value="1"/>
</dbReference>
<dbReference type="Gene3D" id="3.40.720.10">
    <property type="entry name" value="Alkaline Phosphatase, subunit A"/>
    <property type="match status" value="1"/>
</dbReference>
<dbReference type="Gene3D" id="3.30.70.1250">
    <property type="entry name" value="Phosphopentomutase"/>
    <property type="match status" value="1"/>
</dbReference>
<dbReference type="HAMAP" id="MF_00740">
    <property type="entry name" value="Phosphopentomut"/>
    <property type="match status" value="1"/>
</dbReference>
<dbReference type="InterPro" id="IPR017850">
    <property type="entry name" value="Alkaline_phosphatase_core_sf"/>
</dbReference>
<dbReference type="InterPro" id="IPR010045">
    <property type="entry name" value="DeoB"/>
</dbReference>
<dbReference type="InterPro" id="IPR006124">
    <property type="entry name" value="Metalloenzyme"/>
</dbReference>
<dbReference type="InterPro" id="IPR024052">
    <property type="entry name" value="Phosphopentomutase_DeoB_cap_sf"/>
</dbReference>
<dbReference type="NCBIfam" id="TIGR01696">
    <property type="entry name" value="deoB"/>
    <property type="match status" value="1"/>
</dbReference>
<dbReference type="NCBIfam" id="NF003766">
    <property type="entry name" value="PRK05362.1"/>
    <property type="match status" value="1"/>
</dbReference>
<dbReference type="PANTHER" id="PTHR21110">
    <property type="entry name" value="PHOSPHOPENTOMUTASE"/>
    <property type="match status" value="1"/>
</dbReference>
<dbReference type="PANTHER" id="PTHR21110:SF0">
    <property type="entry name" value="PHOSPHOPENTOMUTASE"/>
    <property type="match status" value="1"/>
</dbReference>
<dbReference type="Pfam" id="PF01676">
    <property type="entry name" value="Metalloenzyme"/>
    <property type="match status" value="1"/>
</dbReference>
<dbReference type="PIRSF" id="PIRSF001491">
    <property type="entry name" value="Ppentomutase"/>
    <property type="match status" value="1"/>
</dbReference>
<dbReference type="SUPFAM" id="SSF53649">
    <property type="entry name" value="Alkaline phosphatase-like"/>
    <property type="match status" value="1"/>
</dbReference>
<dbReference type="SUPFAM" id="SSF143856">
    <property type="entry name" value="DeoB insert domain-like"/>
    <property type="match status" value="1"/>
</dbReference>
<accession>A8F670</accession>